<feature type="chain" id="PRO_1000203367" description="dCTP deaminase">
    <location>
        <begin position="1"/>
        <end position="189"/>
    </location>
</feature>
<feature type="active site" description="Proton donor/acceptor" evidence="1">
    <location>
        <position position="138"/>
    </location>
</feature>
<feature type="binding site" evidence="1">
    <location>
        <begin position="112"/>
        <end position="117"/>
    </location>
    <ligand>
        <name>dCTP</name>
        <dbReference type="ChEBI" id="CHEBI:61481"/>
    </ligand>
</feature>
<feature type="binding site" evidence="1">
    <location>
        <begin position="136"/>
        <end position="138"/>
    </location>
    <ligand>
        <name>dCTP</name>
        <dbReference type="ChEBI" id="CHEBI:61481"/>
    </ligand>
</feature>
<feature type="binding site" evidence="1">
    <location>
        <position position="157"/>
    </location>
    <ligand>
        <name>dCTP</name>
        <dbReference type="ChEBI" id="CHEBI:61481"/>
    </ligand>
</feature>
<feature type="binding site" evidence="1">
    <location>
        <position position="171"/>
    </location>
    <ligand>
        <name>dCTP</name>
        <dbReference type="ChEBI" id="CHEBI:61481"/>
    </ligand>
</feature>
<feature type="binding site" evidence="1">
    <location>
        <position position="181"/>
    </location>
    <ligand>
        <name>dCTP</name>
        <dbReference type="ChEBI" id="CHEBI:61481"/>
    </ligand>
</feature>
<comment type="function">
    <text evidence="1">Catalyzes the deamination of dCTP to dUTP.</text>
</comment>
<comment type="catalytic activity">
    <reaction evidence="1">
        <text>dCTP + H2O + H(+) = dUTP + NH4(+)</text>
        <dbReference type="Rhea" id="RHEA:22680"/>
        <dbReference type="ChEBI" id="CHEBI:15377"/>
        <dbReference type="ChEBI" id="CHEBI:15378"/>
        <dbReference type="ChEBI" id="CHEBI:28938"/>
        <dbReference type="ChEBI" id="CHEBI:61481"/>
        <dbReference type="ChEBI" id="CHEBI:61555"/>
        <dbReference type="EC" id="3.5.4.13"/>
    </reaction>
</comment>
<comment type="pathway">
    <text evidence="1">Pyrimidine metabolism; dUMP biosynthesis; dUMP from dCTP (dUTP route): step 1/2.</text>
</comment>
<comment type="subunit">
    <text evidence="1">Homotrimer.</text>
</comment>
<comment type="similarity">
    <text evidence="1">Belongs to the dCTP deaminase family.</text>
</comment>
<keyword id="KW-0378">Hydrolase</keyword>
<keyword id="KW-0546">Nucleotide metabolism</keyword>
<keyword id="KW-0547">Nucleotide-binding</keyword>
<keyword id="KW-1185">Reference proteome</keyword>
<reference key="1">
    <citation type="journal article" date="2009" name="PLoS ONE">
        <title>The complete genome of Teredinibacter turnerae T7901: an intracellular endosymbiont of marine wood-boring bivalves (shipworms).</title>
        <authorList>
            <person name="Yang J.C."/>
            <person name="Madupu R."/>
            <person name="Durkin A.S."/>
            <person name="Ekborg N.A."/>
            <person name="Pedamallu C.S."/>
            <person name="Hostetler J.B."/>
            <person name="Radune D."/>
            <person name="Toms B.S."/>
            <person name="Henrissat B."/>
            <person name="Coutinho P.M."/>
            <person name="Schwarz S."/>
            <person name="Field L."/>
            <person name="Trindade-Silva A.E."/>
            <person name="Soares C.A.G."/>
            <person name="Elshahawi S."/>
            <person name="Hanora A."/>
            <person name="Schmidt E.W."/>
            <person name="Haygood M.G."/>
            <person name="Posfai J."/>
            <person name="Benner J."/>
            <person name="Madinger C."/>
            <person name="Nove J."/>
            <person name="Anton B."/>
            <person name="Chaudhary K."/>
            <person name="Foster J."/>
            <person name="Holman A."/>
            <person name="Kumar S."/>
            <person name="Lessard P.A."/>
            <person name="Luyten Y.A."/>
            <person name="Slatko B."/>
            <person name="Wood N."/>
            <person name="Wu B."/>
            <person name="Teplitski M."/>
            <person name="Mougous J.D."/>
            <person name="Ward N."/>
            <person name="Eisen J.A."/>
            <person name="Badger J.H."/>
            <person name="Distel D.L."/>
        </authorList>
    </citation>
    <scope>NUCLEOTIDE SEQUENCE [LARGE SCALE GENOMIC DNA]</scope>
    <source>
        <strain>ATCC 39867 / T7901</strain>
    </source>
</reference>
<organism>
    <name type="scientific">Teredinibacter turnerae (strain ATCC 39867 / T7901)</name>
    <dbReference type="NCBI Taxonomy" id="377629"/>
    <lineage>
        <taxon>Bacteria</taxon>
        <taxon>Pseudomonadati</taxon>
        <taxon>Pseudomonadota</taxon>
        <taxon>Gammaproteobacteria</taxon>
        <taxon>Cellvibrionales</taxon>
        <taxon>Cellvibrionaceae</taxon>
        <taxon>Teredinibacter</taxon>
    </lineage>
</organism>
<name>DCD_TERTT</name>
<evidence type="ECO:0000255" key="1">
    <source>
        <dbReference type="HAMAP-Rule" id="MF_00146"/>
    </source>
</evidence>
<dbReference type="EC" id="3.5.4.13" evidence="1"/>
<dbReference type="EMBL" id="CP001614">
    <property type="protein sequence ID" value="ACR11529.1"/>
    <property type="molecule type" value="Genomic_DNA"/>
</dbReference>
<dbReference type="RefSeq" id="WP_015817641.1">
    <property type="nucleotide sequence ID" value="NC_012997.1"/>
</dbReference>
<dbReference type="SMR" id="C5BNH5"/>
<dbReference type="STRING" id="377629.TERTU_2968"/>
<dbReference type="KEGG" id="ttu:TERTU_2968"/>
<dbReference type="eggNOG" id="COG0717">
    <property type="taxonomic scope" value="Bacteria"/>
</dbReference>
<dbReference type="HOGENOM" id="CLU_087476_4_0_6"/>
<dbReference type="OrthoDB" id="9780956at2"/>
<dbReference type="UniPathway" id="UPA00610">
    <property type="reaction ID" value="UER00665"/>
</dbReference>
<dbReference type="Proteomes" id="UP000009080">
    <property type="component" value="Chromosome"/>
</dbReference>
<dbReference type="GO" id="GO:0008829">
    <property type="term" value="F:dCTP deaminase activity"/>
    <property type="evidence" value="ECO:0007669"/>
    <property type="project" value="UniProtKB-UniRule"/>
</dbReference>
<dbReference type="GO" id="GO:0000166">
    <property type="term" value="F:nucleotide binding"/>
    <property type="evidence" value="ECO:0007669"/>
    <property type="project" value="UniProtKB-KW"/>
</dbReference>
<dbReference type="GO" id="GO:0006226">
    <property type="term" value="P:dUMP biosynthetic process"/>
    <property type="evidence" value="ECO:0007669"/>
    <property type="project" value="UniProtKB-UniPathway"/>
</dbReference>
<dbReference type="GO" id="GO:0006229">
    <property type="term" value="P:dUTP biosynthetic process"/>
    <property type="evidence" value="ECO:0007669"/>
    <property type="project" value="UniProtKB-UniRule"/>
</dbReference>
<dbReference type="GO" id="GO:0015949">
    <property type="term" value="P:nucleobase-containing small molecule interconversion"/>
    <property type="evidence" value="ECO:0007669"/>
    <property type="project" value="TreeGrafter"/>
</dbReference>
<dbReference type="CDD" id="cd07557">
    <property type="entry name" value="trimeric_dUTPase"/>
    <property type="match status" value="1"/>
</dbReference>
<dbReference type="FunFam" id="2.70.40.10:FF:000001">
    <property type="entry name" value="dCTP deaminase"/>
    <property type="match status" value="1"/>
</dbReference>
<dbReference type="Gene3D" id="2.70.40.10">
    <property type="match status" value="1"/>
</dbReference>
<dbReference type="HAMAP" id="MF_00146">
    <property type="entry name" value="dCTP_deaminase"/>
    <property type="match status" value="1"/>
</dbReference>
<dbReference type="InterPro" id="IPR011962">
    <property type="entry name" value="dCTP_deaminase"/>
</dbReference>
<dbReference type="InterPro" id="IPR036157">
    <property type="entry name" value="dUTPase-like_sf"/>
</dbReference>
<dbReference type="InterPro" id="IPR033704">
    <property type="entry name" value="dUTPase_trimeric"/>
</dbReference>
<dbReference type="NCBIfam" id="TIGR02274">
    <property type="entry name" value="dCTP_deam"/>
    <property type="match status" value="1"/>
</dbReference>
<dbReference type="PANTHER" id="PTHR42680">
    <property type="entry name" value="DCTP DEAMINASE"/>
    <property type="match status" value="1"/>
</dbReference>
<dbReference type="PANTHER" id="PTHR42680:SF3">
    <property type="entry name" value="DCTP DEAMINASE"/>
    <property type="match status" value="1"/>
</dbReference>
<dbReference type="Pfam" id="PF22769">
    <property type="entry name" value="DCD"/>
    <property type="match status" value="1"/>
</dbReference>
<dbReference type="SUPFAM" id="SSF51283">
    <property type="entry name" value="dUTPase-like"/>
    <property type="match status" value="1"/>
</dbReference>
<accession>C5BNH5</accession>
<gene>
    <name evidence="1" type="primary">dcd</name>
    <name type="ordered locus">TERTU_2968</name>
</gene>
<protein>
    <recommendedName>
        <fullName evidence="1">dCTP deaminase</fullName>
        <ecNumber evidence="1">3.5.4.13</ecNumber>
    </recommendedName>
    <alternativeName>
        <fullName evidence="1">Deoxycytidine triphosphate deaminase</fullName>
    </alternativeName>
</protein>
<sequence>MSIKSDKWIRRMAEQEGMIEPFEPGQIRYDSNNQKLVSYGTSSYGYDVRCAREFKIFTNVHSAVVDPKNFDEHSFVDISSDVCIIPPNSFALARTVEYFRIPRSVLTVCLGKSTYARCGIIVNVTPLEPEWEGHVTLEFSNTTPLPAKIYANEGIAQMLFFESDEICDTSYRDRGGKYQGQTGVTLPKT</sequence>
<proteinExistence type="inferred from homology"/>